<dbReference type="EC" id="3.6.1.9" evidence="1"/>
<dbReference type="EMBL" id="AP006627">
    <property type="protein sequence ID" value="BAD65151.1"/>
    <property type="molecule type" value="Genomic_DNA"/>
</dbReference>
<dbReference type="RefSeq" id="WP_011247459.1">
    <property type="nucleotide sequence ID" value="NC_006582.1"/>
</dbReference>
<dbReference type="SMR" id="Q5WEQ9"/>
<dbReference type="STRING" id="66692.ABC2616"/>
<dbReference type="KEGG" id="bcl:ABC2616"/>
<dbReference type="eggNOG" id="COG0424">
    <property type="taxonomic scope" value="Bacteria"/>
</dbReference>
<dbReference type="HOGENOM" id="CLU_040416_0_0_9"/>
<dbReference type="OrthoDB" id="9807767at2"/>
<dbReference type="Proteomes" id="UP000001168">
    <property type="component" value="Chromosome"/>
</dbReference>
<dbReference type="GO" id="GO:0005737">
    <property type="term" value="C:cytoplasm"/>
    <property type="evidence" value="ECO:0007669"/>
    <property type="project" value="UniProtKB-SubCell"/>
</dbReference>
<dbReference type="GO" id="GO:0036218">
    <property type="term" value="F:dTTP diphosphatase activity"/>
    <property type="evidence" value="ECO:0007669"/>
    <property type="project" value="RHEA"/>
</dbReference>
<dbReference type="GO" id="GO:0036221">
    <property type="term" value="F:UTP diphosphatase activity"/>
    <property type="evidence" value="ECO:0007669"/>
    <property type="project" value="RHEA"/>
</dbReference>
<dbReference type="GO" id="GO:0009117">
    <property type="term" value="P:nucleotide metabolic process"/>
    <property type="evidence" value="ECO:0007669"/>
    <property type="project" value="UniProtKB-KW"/>
</dbReference>
<dbReference type="CDD" id="cd00555">
    <property type="entry name" value="Maf"/>
    <property type="match status" value="1"/>
</dbReference>
<dbReference type="Gene3D" id="3.90.950.10">
    <property type="match status" value="1"/>
</dbReference>
<dbReference type="HAMAP" id="MF_00528">
    <property type="entry name" value="Maf"/>
    <property type="match status" value="1"/>
</dbReference>
<dbReference type="InterPro" id="IPR029001">
    <property type="entry name" value="ITPase-like_fam"/>
</dbReference>
<dbReference type="InterPro" id="IPR003697">
    <property type="entry name" value="Maf-like"/>
</dbReference>
<dbReference type="NCBIfam" id="TIGR00172">
    <property type="entry name" value="maf"/>
    <property type="match status" value="1"/>
</dbReference>
<dbReference type="PANTHER" id="PTHR43213">
    <property type="entry name" value="BIFUNCTIONAL DTTP/UTP PYROPHOSPHATASE/METHYLTRANSFERASE PROTEIN-RELATED"/>
    <property type="match status" value="1"/>
</dbReference>
<dbReference type="PANTHER" id="PTHR43213:SF5">
    <property type="entry name" value="BIFUNCTIONAL DTTP_UTP PYROPHOSPHATASE_METHYLTRANSFERASE PROTEIN-RELATED"/>
    <property type="match status" value="1"/>
</dbReference>
<dbReference type="Pfam" id="PF02545">
    <property type="entry name" value="Maf"/>
    <property type="match status" value="1"/>
</dbReference>
<dbReference type="PIRSF" id="PIRSF006305">
    <property type="entry name" value="Maf"/>
    <property type="match status" value="1"/>
</dbReference>
<dbReference type="SUPFAM" id="SSF52972">
    <property type="entry name" value="ITPase-like"/>
    <property type="match status" value="1"/>
</dbReference>
<accession>Q5WEQ9</accession>
<proteinExistence type="inferred from homology"/>
<organism>
    <name type="scientific">Shouchella clausii (strain KSM-K16)</name>
    <name type="common">Alkalihalobacillus clausii</name>
    <dbReference type="NCBI Taxonomy" id="66692"/>
    <lineage>
        <taxon>Bacteria</taxon>
        <taxon>Bacillati</taxon>
        <taxon>Bacillota</taxon>
        <taxon>Bacilli</taxon>
        <taxon>Bacillales</taxon>
        <taxon>Bacillaceae</taxon>
        <taxon>Shouchella</taxon>
    </lineage>
</organism>
<reference key="1">
    <citation type="submission" date="2003-10" db="EMBL/GenBank/DDBJ databases">
        <title>The complete genome sequence of the alkaliphilic Bacillus clausii KSM-K16.</title>
        <authorList>
            <person name="Takaki Y."/>
            <person name="Kageyama Y."/>
            <person name="Shimamura S."/>
            <person name="Suzuki H."/>
            <person name="Nishi S."/>
            <person name="Hatada Y."/>
            <person name="Kawai S."/>
            <person name="Ito S."/>
            <person name="Horikoshi K."/>
        </authorList>
    </citation>
    <scope>NUCLEOTIDE SEQUENCE [LARGE SCALE GENOMIC DNA]</scope>
    <source>
        <strain>KSM-K16</strain>
    </source>
</reference>
<gene>
    <name type="primary">maf</name>
    <name type="ordered locus">ABC2616</name>
</gene>
<protein>
    <recommendedName>
        <fullName evidence="1">dTTP/UTP pyrophosphatase</fullName>
        <shortName evidence="1">dTTPase/UTPase</shortName>
        <ecNumber evidence="1">3.6.1.9</ecNumber>
    </recommendedName>
    <alternativeName>
        <fullName evidence="1">Nucleoside triphosphate pyrophosphatase</fullName>
    </alternativeName>
    <alternativeName>
        <fullName evidence="1">Nucleotide pyrophosphatase</fullName>
        <shortName evidence="1">Nucleotide PPase</shortName>
    </alternativeName>
</protein>
<evidence type="ECO:0000255" key="1">
    <source>
        <dbReference type="HAMAP-Rule" id="MF_00528"/>
    </source>
</evidence>
<sequence>MNTFLLASSSPRRSEFLKQCHYQFFTQPSNVEETFDPTWENDTIVKELARRKAASVAANHPNAVVLGADTIVVHNGKHLGKPANVAEAKTMLMALSNSTHTVYTGVAILHGNKEHVFSDAAKVTFDELTPERLERYLQSGDSLDKAGAYGIQSFGAIFVSRIEGDFYTVAGLPLSKTAKALEKFHIYPNIG</sequence>
<keyword id="KW-0963">Cytoplasm</keyword>
<keyword id="KW-0378">Hydrolase</keyword>
<keyword id="KW-0546">Nucleotide metabolism</keyword>
<keyword id="KW-1185">Reference proteome</keyword>
<name>NTPPA_SHOC1</name>
<comment type="function">
    <text evidence="1">Nucleoside triphosphate pyrophosphatase that hydrolyzes dTTP and UTP. May have a dual role in cell division arrest and in preventing the incorporation of modified nucleotides into cellular nucleic acids.</text>
</comment>
<comment type="catalytic activity">
    <reaction evidence="1">
        <text>dTTP + H2O = dTMP + diphosphate + H(+)</text>
        <dbReference type="Rhea" id="RHEA:28534"/>
        <dbReference type="ChEBI" id="CHEBI:15377"/>
        <dbReference type="ChEBI" id="CHEBI:15378"/>
        <dbReference type="ChEBI" id="CHEBI:33019"/>
        <dbReference type="ChEBI" id="CHEBI:37568"/>
        <dbReference type="ChEBI" id="CHEBI:63528"/>
        <dbReference type="EC" id="3.6.1.9"/>
    </reaction>
</comment>
<comment type="catalytic activity">
    <reaction evidence="1">
        <text>UTP + H2O = UMP + diphosphate + H(+)</text>
        <dbReference type="Rhea" id="RHEA:29395"/>
        <dbReference type="ChEBI" id="CHEBI:15377"/>
        <dbReference type="ChEBI" id="CHEBI:15378"/>
        <dbReference type="ChEBI" id="CHEBI:33019"/>
        <dbReference type="ChEBI" id="CHEBI:46398"/>
        <dbReference type="ChEBI" id="CHEBI:57865"/>
        <dbReference type="EC" id="3.6.1.9"/>
    </reaction>
</comment>
<comment type="cofactor">
    <cofactor evidence="1">
        <name>a divalent metal cation</name>
        <dbReference type="ChEBI" id="CHEBI:60240"/>
    </cofactor>
</comment>
<comment type="subcellular location">
    <subcellularLocation>
        <location evidence="1">Cytoplasm</location>
    </subcellularLocation>
</comment>
<comment type="similarity">
    <text evidence="1">Belongs to the Maf family. YhdE subfamily.</text>
</comment>
<feature type="chain" id="PRO_0000267231" description="dTTP/UTP pyrophosphatase">
    <location>
        <begin position="1"/>
        <end position="191"/>
    </location>
</feature>
<feature type="active site" description="Proton acceptor" evidence="1">
    <location>
        <position position="69"/>
    </location>
</feature>
<feature type="site" description="Important for substrate specificity" evidence="1">
    <location>
        <position position="12"/>
    </location>
</feature>
<feature type="site" description="Important for substrate specificity" evidence="1">
    <location>
        <position position="70"/>
    </location>
</feature>
<feature type="site" description="Important for substrate specificity" evidence="1">
    <location>
        <position position="152"/>
    </location>
</feature>